<gene>
    <name evidence="1" type="primary">CD22</name>
    <name type="synonym">SIGLEC2</name>
</gene>
<evidence type="ECO:0000250" key="1">
    <source>
        <dbReference type="UniProtKB" id="P20273"/>
    </source>
</evidence>
<evidence type="ECO:0000250" key="2">
    <source>
        <dbReference type="UniProtKB" id="P35329"/>
    </source>
</evidence>
<evidence type="ECO:0000255" key="3"/>
<evidence type="ECO:0000255" key="4">
    <source>
        <dbReference type="PROSITE-ProRule" id="PRU00114"/>
    </source>
</evidence>
<evidence type="ECO:0000305" key="5"/>
<proteinExistence type="evidence at transcript level"/>
<name>CD22_GORGO</name>
<accession>Q9N1E4</accession>
<accession>G3R153</accession>
<sequence>MHLLGPWLLLLVLEYLAFCDSSKWAFEHPETLYAWEGACVWIPCTYRALDGDLESFILFHNPEYNKNTSKFDGTRLYESTKDGKVPSEQKRVQFLGDKKKNCTLSIHPVHVNDSGQLGLRMESKTEKWMERIHLNVSERPFPPHIQLPPEIQESQEVTLTCLLNFSCYGYPIQLQWLLEGVPMRQAAVTSTSLTIKSVFTRSELKFSPQWSHHGKIVTCQLQDADGKFLSNDTVQLNVKHTPKLEIKVTPSDAIVREGDSVTMTCEVSSSNPMYTTVSWLKDGTSLKKQNTLTLNLSEVTKDQSGKYYCQVSNDVGPERSAEVFLQVQYAPEPSTVQILHSPAVEGSEVEFLCMSLANPLPTNYTWYHNGKEMQGRTEEKVHIPKILPWHAGTYSCVAENILGTGQRGPGAELDVQYPPKKVTTVIQNPTPIREGDTVTLSCNYNSSNPSVTRYEWKAHGTWEEPSLGVLKIQNIGWDNTTIACAACNNWCSWASPVALNVQYAPRDVRVRKIKPLSEIHSGNSVSLQCDFSSSHPKEVQFFWEKNGRLLGKESQLNFDSISPEDAGSYSCWVNNSIGQTASKAWTLEVLYAPRRLRVSMSPGDQVMEGKSATLTCESDANPPVSHYTWFDWNNQSLPYHSQKLRLEPVKVQHSGAYWCQGTNSVGKGRSPLSTLNVYYSPETIGRRVAVGLGSCLAILILAICGLKLQRRWKRTQSQQGLQENSSGQSFFVRNKKVRRAPLSEGPHSLGCYNPMMEDGISYTTLRFPETNIPRTGDAETSEMQSPPPDCDDTVTYSVLHKRQMGDYENVIPDFSEDEGIHYSELIQFGVGERPQAQENVDYVILKH</sequence>
<keyword id="KW-0130">Cell adhesion</keyword>
<keyword id="KW-1003">Cell membrane</keyword>
<keyword id="KW-1015">Disulfide bond</keyword>
<keyword id="KW-0325">Glycoprotein</keyword>
<keyword id="KW-0393">Immunoglobulin domain</keyword>
<keyword id="KW-1017">Isopeptide bond</keyword>
<keyword id="KW-0430">Lectin</keyword>
<keyword id="KW-0472">Membrane</keyword>
<keyword id="KW-0597">Phosphoprotein</keyword>
<keyword id="KW-1185">Reference proteome</keyword>
<keyword id="KW-0677">Repeat</keyword>
<keyword id="KW-0732">Signal</keyword>
<keyword id="KW-0812">Transmembrane</keyword>
<keyword id="KW-1133">Transmembrane helix</keyword>
<dbReference type="EMBL" id="CABD030113190">
    <property type="status" value="NOT_ANNOTATED_CDS"/>
    <property type="molecule type" value="Genomic_DNA"/>
</dbReference>
<dbReference type="EMBL" id="AF199417">
    <property type="protein sequence ID" value="AAF44616.1"/>
    <property type="molecule type" value="mRNA"/>
</dbReference>
<dbReference type="RefSeq" id="XP_004060557.1">
    <property type="nucleotide sequence ID" value="XM_004060509.5"/>
</dbReference>
<dbReference type="SMR" id="Q9N1E4"/>
<dbReference type="FunCoup" id="Q9N1E4">
    <property type="interactions" value="384"/>
</dbReference>
<dbReference type="STRING" id="9593.ENSGGOP00000008903"/>
<dbReference type="GlyCosmos" id="Q9N1E4">
    <property type="glycosylation" value="14 sites, No reported glycans"/>
</dbReference>
<dbReference type="Ensembl" id="ENSGGOT00000009149.3">
    <property type="protein sequence ID" value="ENSGGOP00000008903.2"/>
    <property type="gene ID" value="ENSGGOG00000009101.3"/>
</dbReference>
<dbReference type="GeneID" id="101140765"/>
<dbReference type="KEGG" id="ggo:101140765"/>
<dbReference type="CTD" id="933"/>
<dbReference type="eggNOG" id="KOG4475">
    <property type="taxonomic scope" value="Eukaryota"/>
</dbReference>
<dbReference type="GeneTree" id="ENSGT01120000271890"/>
<dbReference type="HOGENOM" id="CLU_017949_0_0_1"/>
<dbReference type="InParanoid" id="Q9N1E4"/>
<dbReference type="OMA" id="DWNNQDL"/>
<dbReference type="TreeFam" id="TF334827"/>
<dbReference type="Proteomes" id="UP000001519">
    <property type="component" value="Chromosome 19"/>
</dbReference>
<dbReference type="Bgee" id="ENSGGOG00000009101">
    <property type="expression patterns" value="Expressed in liver and 3 other cell types or tissues"/>
</dbReference>
<dbReference type="GO" id="GO:0005769">
    <property type="term" value="C:early endosome"/>
    <property type="evidence" value="ECO:0000318"/>
    <property type="project" value="GO_Central"/>
</dbReference>
<dbReference type="GO" id="GO:0009897">
    <property type="term" value="C:external side of plasma membrane"/>
    <property type="evidence" value="ECO:0000318"/>
    <property type="project" value="GO_Central"/>
</dbReference>
<dbReference type="GO" id="GO:0032809">
    <property type="term" value="C:neuronal cell body membrane"/>
    <property type="evidence" value="ECO:0007669"/>
    <property type="project" value="Ensembl"/>
</dbReference>
<dbReference type="GO" id="GO:0055037">
    <property type="term" value="C:recycling endosome"/>
    <property type="evidence" value="ECO:0000318"/>
    <property type="project" value="GO_Central"/>
</dbReference>
<dbReference type="GO" id="GO:0030246">
    <property type="term" value="F:carbohydrate binding"/>
    <property type="evidence" value="ECO:0007669"/>
    <property type="project" value="UniProtKB-KW"/>
</dbReference>
<dbReference type="GO" id="GO:0042609">
    <property type="term" value="F:CD4 receptor binding"/>
    <property type="evidence" value="ECO:0000318"/>
    <property type="project" value="GO_Central"/>
</dbReference>
<dbReference type="GO" id="GO:0019903">
    <property type="term" value="F:protein phosphatase binding"/>
    <property type="evidence" value="ECO:0000318"/>
    <property type="project" value="GO_Central"/>
</dbReference>
<dbReference type="GO" id="GO:0033691">
    <property type="term" value="F:sialic acid binding"/>
    <property type="evidence" value="ECO:0000318"/>
    <property type="project" value="GO_Central"/>
</dbReference>
<dbReference type="GO" id="GO:0042113">
    <property type="term" value="P:B cell activation"/>
    <property type="evidence" value="ECO:0000318"/>
    <property type="project" value="GO_Central"/>
</dbReference>
<dbReference type="GO" id="GO:0007155">
    <property type="term" value="P:cell adhesion"/>
    <property type="evidence" value="ECO:0007669"/>
    <property type="project" value="UniProtKB-KW"/>
</dbReference>
<dbReference type="GO" id="GO:0050859">
    <property type="term" value="P:negative regulation of B cell receptor signaling pathway"/>
    <property type="evidence" value="ECO:0000318"/>
    <property type="project" value="GO_Central"/>
</dbReference>
<dbReference type="GO" id="GO:0050849">
    <property type="term" value="P:negative regulation of calcium-mediated signaling"/>
    <property type="evidence" value="ECO:0007669"/>
    <property type="project" value="Ensembl"/>
</dbReference>
<dbReference type="GO" id="GO:0002638">
    <property type="term" value="P:negative regulation of immunoglobulin production"/>
    <property type="evidence" value="ECO:0007669"/>
    <property type="project" value="Ensembl"/>
</dbReference>
<dbReference type="GO" id="GO:0030888">
    <property type="term" value="P:regulation of B cell proliferation"/>
    <property type="evidence" value="ECO:0000318"/>
    <property type="project" value="GO_Central"/>
</dbReference>
<dbReference type="GO" id="GO:0030100">
    <property type="term" value="P:regulation of endocytosis"/>
    <property type="evidence" value="ECO:0007669"/>
    <property type="project" value="Ensembl"/>
</dbReference>
<dbReference type="CDD" id="cd20938">
    <property type="entry name" value="IgC1_CD22_d2"/>
    <property type="match status" value="1"/>
</dbReference>
<dbReference type="CDD" id="cd20937">
    <property type="entry name" value="IgC2_CD22_d3"/>
    <property type="match status" value="1"/>
</dbReference>
<dbReference type="CDD" id="cd20929">
    <property type="entry name" value="IgV_CD22_d1"/>
    <property type="match status" value="1"/>
</dbReference>
<dbReference type="FunFam" id="2.60.40.10:FF:001199">
    <property type="entry name" value="B-cell receptor CD22"/>
    <property type="match status" value="1"/>
</dbReference>
<dbReference type="FunFam" id="2.60.40.10:FF:001605">
    <property type="entry name" value="B-cell receptor CD22"/>
    <property type="match status" value="1"/>
</dbReference>
<dbReference type="FunFam" id="2.60.40.10:FF:002011">
    <property type="entry name" value="B-cell receptor CD22"/>
    <property type="match status" value="1"/>
</dbReference>
<dbReference type="FunFam" id="2.60.40.10:FF:002030">
    <property type="entry name" value="B-cell receptor CD22"/>
    <property type="match status" value="1"/>
</dbReference>
<dbReference type="FunFam" id="2.60.40.10:FF:002336">
    <property type="entry name" value="B-cell receptor CD22"/>
    <property type="match status" value="1"/>
</dbReference>
<dbReference type="Gene3D" id="2.60.40.10">
    <property type="entry name" value="Immunoglobulins"/>
    <property type="match status" value="7"/>
</dbReference>
<dbReference type="InterPro" id="IPR013162">
    <property type="entry name" value="CD80_C2-set"/>
</dbReference>
<dbReference type="InterPro" id="IPR007110">
    <property type="entry name" value="Ig-like_dom"/>
</dbReference>
<dbReference type="InterPro" id="IPR036179">
    <property type="entry name" value="Ig-like_dom_sf"/>
</dbReference>
<dbReference type="InterPro" id="IPR013783">
    <property type="entry name" value="Ig-like_fold"/>
</dbReference>
<dbReference type="InterPro" id="IPR056386">
    <property type="entry name" value="Ig_CD22"/>
</dbReference>
<dbReference type="InterPro" id="IPR003599">
    <property type="entry name" value="Ig_sub"/>
</dbReference>
<dbReference type="InterPro" id="IPR003598">
    <property type="entry name" value="Ig_sub2"/>
</dbReference>
<dbReference type="PANTHER" id="PTHR46958">
    <property type="entry name" value="B-CELL RECEPTOR CD22"/>
    <property type="match status" value="1"/>
</dbReference>
<dbReference type="PANTHER" id="PTHR46958:SF1">
    <property type="entry name" value="B-CELL RECEPTOR CD22"/>
    <property type="match status" value="1"/>
</dbReference>
<dbReference type="Pfam" id="PF08205">
    <property type="entry name" value="C2-set_2"/>
    <property type="match status" value="1"/>
</dbReference>
<dbReference type="Pfam" id="PF13895">
    <property type="entry name" value="Ig_2"/>
    <property type="match status" value="1"/>
</dbReference>
<dbReference type="Pfam" id="PF13927">
    <property type="entry name" value="Ig_3"/>
    <property type="match status" value="3"/>
</dbReference>
<dbReference type="Pfam" id="PF24518">
    <property type="entry name" value="Ig_CD22"/>
    <property type="match status" value="1"/>
</dbReference>
<dbReference type="SMART" id="SM00409">
    <property type="entry name" value="IG"/>
    <property type="match status" value="7"/>
</dbReference>
<dbReference type="SMART" id="SM00408">
    <property type="entry name" value="IGc2"/>
    <property type="match status" value="4"/>
</dbReference>
<dbReference type="SUPFAM" id="SSF48726">
    <property type="entry name" value="Immunoglobulin"/>
    <property type="match status" value="7"/>
</dbReference>
<dbReference type="PROSITE" id="PS50835">
    <property type="entry name" value="IG_LIKE"/>
    <property type="match status" value="6"/>
</dbReference>
<reference key="1">
    <citation type="journal article" date="2012" name="Nature">
        <title>Insights into hominid evolution from the gorilla genome sequence.</title>
        <authorList>
            <person name="Scally A."/>
            <person name="Dutheil J.Y."/>
            <person name="Hillier L.W."/>
            <person name="Jordan G.E."/>
            <person name="Goodhead I."/>
            <person name="Herrero J."/>
            <person name="Hobolth A."/>
            <person name="Lappalainen T."/>
            <person name="Mailund T."/>
            <person name="Marques-Bonet T."/>
            <person name="McCarthy S."/>
            <person name="Montgomery S.H."/>
            <person name="Schwalie P.C."/>
            <person name="Tang Y.A."/>
            <person name="Ward M.C."/>
            <person name="Xue Y."/>
            <person name="Yngvadottir B."/>
            <person name="Alkan C."/>
            <person name="Andersen L.N."/>
            <person name="Ayub Q."/>
            <person name="Ball E.V."/>
            <person name="Beal K."/>
            <person name="Bradley B.J."/>
            <person name="Chen Y."/>
            <person name="Clee C.M."/>
            <person name="Fitzgerald S."/>
            <person name="Graves T.A."/>
            <person name="Gu Y."/>
            <person name="Heath P."/>
            <person name="Heger A."/>
            <person name="Karakoc E."/>
            <person name="Kolb-Kokocinski A."/>
            <person name="Laird G.K."/>
            <person name="Lunter G."/>
            <person name="Meader S."/>
            <person name="Mort M."/>
            <person name="Mullikin J.C."/>
            <person name="Munch K."/>
            <person name="O'Connor T.D."/>
            <person name="Phillips A.D."/>
            <person name="Prado-Martinez J."/>
            <person name="Rogers A.S."/>
            <person name="Sajjadian S."/>
            <person name="Schmidt D."/>
            <person name="Shaw K."/>
            <person name="Simpson J.T."/>
            <person name="Stenson P.D."/>
            <person name="Turner D.J."/>
            <person name="Vigilant L."/>
            <person name="Vilella A.J."/>
            <person name="Whitener W."/>
            <person name="Zhu B."/>
            <person name="Cooper D.N."/>
            <person name="de Jong P."/>
            <person name="Dermitzakis E.T."/>
            <person name="Eichler E.E."/>
            <person name="Flicek P."/>
            <person name="Goldman N."/>
            <person name="Mundy N.I."/>
            <person name="Ning Z."/>
            <person name="Odom D.T."/>
            <person name="Ponting C.P."/>
            <person name="Quail M.A."/>
            <person name="Ryder O.A."/>
            <person name="Searle S.M."/>
            <person name="Warren W.C."/>
            <person name="Wilson R.K."/>
            <person name="Schierup M.H."/>
            <person name="Rogers J."/>
            <person name="Tyler-Smith C."/>
            <person name="Durbin R."/>
        </authorList>
    </citation>
    <scope>NUCLEOTIDE SEQUENCE [LARGE SCALE GENOMIC DNA]</scope>
</reference>
<reference key="2">
    <citation type="journal article" date="2000" name="J. Biol. Chem.">
        <title>Loss of N-glycolylneuraminic acid in human evolution: implications for sialic acid recognition by siglecs.</title>
        <authorList>
            <person name="Brinkman-Van der Linden E.C.M."/>
            <person name="Sjoberg E.R."/>
            <person name="Juneja L.R."/>
            <person name="Crocker P.R."/>
            <person name="Varki N."/>
            <person name="Varki A."/>
        </authorList>
    </citation>
    <scope>NUCLEOTIDE SEQUENCE [MRNA] OF 1-332</scope>
</reference>
<protein>
    <recommendedName>
        <fullName evidence="1">B-cell receptor CD22</fullName>
    </recommendedName>
    <alternativeName>
        <fullName>Sialic acid-binding Ig-like lectin 2</fullName>
        <shortName>Siglec-2</shortName>
    </alternativeName>
    <cdAntigenName>CD22</cdAntigenName>
</protein>
<organism>
    <name type="scientific">Gorilla gorilla gorilla</name>
    <name type="common">Western lowland gorilla</name>
    <dbReference type="NCBI Taxonomy" id="9595"/>
    <lineage>
        <taxon>Eukaryota</taxon>
        <taxon>Metazoa</taxon>
        <taxon>Chordata</taxon>
        <taxon>Craniata</taxon>
        <taxon>Vertebrata</taxon>
        <taxon>Euteleostomi</taxon>
        <taxon>Mammalia</taxon>
        <taxon>Eutheria</taxon>
        <taxon>Euarchontoglires</taxon>
        <taxon>Primates</taxon>
        <taxon>Haplorrhini</taxon>
        <taxon>Catarrhini</taxon>
        <taxon>Hominidae</taxon>
        <taxon>Gorilla</taxon>
    </lineage>
</organism>
<feature type="signal peptide" evidence="3">
    <location>
        <begin position="1"/>
        <end position="19"/>
    </location>
</feature>
<feature type="chain" id="PRO_0000014872" description="B-cell receptor CD22" evidence="3">
    <location>
        <begin position="20"/>
        <end position="847"/>
    </location>
</feature>
<feature type="topological domain" description="Extracellular" evidence="5">
    <location>
        <begin position="20"/>
        <end position="687"/>
    </location>
</feature>
<feature type="transmembrane region" description="Helical" evidence="3">
    <location>
        <begin position="688"/>
        <end position="708"/>
    </location>
</feature>
<feature type="topological domain" description="Cytoplasmic" evidence="5">
    <location>
        <begin position="709"/>
        <end position="847"/>
    </location>
</feature>
<feature type="domain" description="Ig-like V-type" evidence="1">
    <location>
        <begin position="20"/>
        <end position="138"/>
    </location>
</feature>
<feature type="domain" description="Ig-like C2-type 1" evidence="4">
    <location>
        <begin position="143"/>
        <end position="235"/>
    </location>
</feature>
<feature type="domain" description="Ig-like C2-type 2" evidence="4">
    <location>
        <begin position="242"/>
        <end position="324"/>
    </location>
</feature>
<feature type="domain" description="Ig-like C2-type 3" evidence="4">
    <location>
        <begin position="331"/>
        <end position="416"/>
    </location>
</feature>
<feature type="domain" description="Ig-like C2-type 4" evidence="4">
    <location>
        <begin position="419"/>
        <end position="500"/>
    </location>
</feature>
<feature type="domain" description="Ig-like C2-type 5" evidence="4">
    <location>
        <begin position="505"/>
        <end position="582"/>
    </location>
</feature>
<feature type="domain" description="Ig-like C2-type 6" evidence="4">
    <location>
        <begin position="593"/>
        <end position="676"/>
    </location>
</feature>
<feature type="short sequence motif" description="ITIM motif 1" evidence="1">
    <location>
        <begin position="760"/>
        <end position="765"/>
    </location>
</feature>
<feature type="short sequence motif" description="ITIM motif 2" evidence="1">
    <location>
        <begin position="794"/>
        <end position="799"/>
    </location>
</feature>
<feature type="short sequence motif" description="ITIM motif 3" evidence="1">
    <location>
        <begin position="820"/>
        <end position="825"/>
    </location>
</feature>
<feature type="short sequence motif" description="ITIM motif 4" evidence="1">
    <location>
        <begin position="840"/>
        <end position="845"/>
    </location>
</feature>
<feature type="binding site" evidence="1">
    <location>
        <position position="120"/>
    </location>
    <ligand>
        <name>N-acetylneuraminate</name>
        <dbReference type="ChEBI" id="CHEBI:35418"/>
    </ligand>
</feature>
<feature type="modified residue" description="Phosphoserine" evidence="2">
    <location>
        <position position="725"/>
    </location>
</feature>
<feature type="modified residue" description="Phosphoserine" evidence="2">
    <location>
        <position position="726"/>
    </location>
</feature>
<feature type="modified residue" description="Phosphoserine" evidence="2">
    <location>
        <position position="729"/>
    </location>
</feature>
<feature type="modified residue" description="Phosphotyrosine" evidence="2">
    <location>
        <position position="762"/>
    </location>
</feature>
<feature type="modified residue" description="Phosphotyrosine" evidence="2">
    <location>
        <position position="807"/>
    </location>
</feature>
<feature type="modified residue" description="Phosphotyrosine" evidence="2">
    <location>
        <position position="822"/>
    </location>
</feature>
<feature type="modified residue" description="Phosphotyrosine" evidence="2">
    <location>
        <position position="842"/>
    </location>
</feature>
<feature type="glycosylation site" description="N-linked (GlcNAc...) asparagine" evidence="3">
    <location>
        <position position="67"/>
    </location>
</feature>
<feature type="glycosylation site" description="N-linked (GlcNAc...) asparagine" evidence="3">
    <location>
        <position position="101"/>
    </location>
</feature>
<feature type="glycosylation site" description="N-linked (GlcNAc...) asparagine" evidence="3">
    <location>
        <position position="112"/>
    </location>
</feature>
<feature type="glycosylation site" description="N-linked (GlcNAc...) asparagine" evidence="3">
    <location>
        <position position="135"/>
    </location>
</feature>
<feature type="glycosylation site" description="N-linked (GlcNAc...) asparagine" evidence="3">
    <location>
        <position position="164"/>
    </location>
</feature>
<feature type="glycosylation site" description="N-linked (GlcNAc...) asparagine" evidence="3">
    <location>
        <position position="231"/>
    </location>
</feature>
<feature type="glycosylation site" description="N-linked (GlcNAc...) asparagine" evidence="3">
    <location>
        <position position="295"/>
    </location>
</feature>
<feature type="glycosylation site" description="N-linked (GlcNAc...) asparagine" evidence="3">
    <location>
        <position position="363"/>
    </location>
</feature>
<feature type="glycosylation site" description="N-linked (GlcNAc...) asparagine" evidence="3">
    <location>
        <position position="428"/>
    </location>
</feature>
<feature type="glycosylation site" description="N-linked (GlcNAc...) asparagine" evidence="3">
    <location>
        <position position="445"/>
    </location>
</feature>
<feature type="glycosylation site" description="N-linked (GlcNAc...) asparagine" evidence="3">
    <location>
        <position position="448"/>
    </location>
</feature>
<feature type="glycosylation site" description="N-linked (GlcNAc...) asparagine" evidence="3">
    <location>
        <position position="479"/>
    </location>
</feature>
<feature type="glycosylation site" description="N-linked (GlcNAc...) asparagine" evidence="3">
    <location>
        <position position="574"/>
    </location>
</feature>
<feature type="glycosylation site" description="N-linked (GlcNAc...) asparagine" evidence="3">
    <location>
        <position position="634"/>
    </location>
</feature>
<feature type="disulfide bond" evidence="4">
    <location>
        <begin position="161"/>
        <end position="219"/>
    </location>
</feature>
<feature type="disulfide bond" evidence="4">
    <location>
        <begin position="265"/>
        <end position="309"/>
    </location>
</feature>
<feature type="disulfide bond" evidence="4">
    <location>
        <begin position="353"/>
        <end position="396"/>
    </location>
</feature>
<feature type="disulfide bond" evidence="4">
    <location>
        <begin position="442"/>
        <end position="484"/>
    </location>
</feature>
<feature type="disulfide bond" evidence="4">
    <location>
        <begin position="529"/>
        <end position="571"/>
    </location>
</feature>
<feature type="disulfide bond" evidence="4">
    <location>
        <begin position="616"/>
        <end position="659"/>
    </location>
</feature>
<feature type="sequence conflict" description="In Ref. 2; AAF44616." evidence="5" ref="2">
    <original>V</original>
    <variation>G</variation>
    <location>
        <position position="12"/>
    </location>
</feature>
<feature type="sequence conflict" description="In Ref. 2; AAF44616." evidence="5" ref="2">
    <original>C</original>
    <variation>Y</variation>
    <location>
        <position position="309"/>
    </location>
</feature>
<comment type="function">
    <text evidence="1">Most highly expressed siglec (sialic acid-binding immunoglobulin-like lectin) on B-cells that plays a role in various aspects of B-cell biology including differentiation, antigen presentation, and trafficking to bone marrow. Binds to alpha 2,6-linked sialic acid residues of surface molecules such as CD22 itself, CD45 and IgM in a cis configuration. Can also bind to ligands on other cells as an adhesion molecule in a trans configuration. Acts as an inhibitory coreceptor on the surface of B-cells and inhibits B-cell receptor induced signaling, characterized by inhibition of the calcium mobilization and cellular activation. Mechanistically, the immunoreceptor tyrosine-based inhibitory motif domain is phosphorylated by the Src kinase LYN, which in turn leads to the recruitment of the protein tyrosine phosphatase 1/PTPN6, leading to the negative regulation of BCR signaling. If this negative signaling from is of sufficient strength, apoptosis of the B-cell can be induced.</text>
</comment>
<comment type="subunit">
    <text evidence="1 2">Predominantly monomer of isoform CD22-beta. Also found as heterodimer of isoform CD22-beta and a shorter isoform. Interacts with PTPN6/SHP-1, LYN, SYK, PIK3R1/PIK3R2 and PLCG1 upon phosphorylation. Interacts with GRB2, INPP5D and SHC1 upon phosphorylation (By similarity). May form a complex with INPP5D/SHIP, GRB2 and SHC1 (By similarity).</text>
</comment>
<comment type="subcellular location">
    <subcellularLocation>
        <location evidence="1">Cell membrane</location>
        <topology evidence="1">Single-pass type I membrane protein</topology>
    </subcellularLocation>
</comment>
<comment type="domain">
    <text evidence="1">Contains 4 copies of a cytoplasmic motif that is referred to as the immunoreceptor tyrosine-based inhibitor motif (ITIM). This motif is involved in modulation of cellular responses. The phosphorylated ITIM motif can bind the SH2 domain of several SH2-containing phosphatases.</text>
</comment>
<comment type="PTM">
    <text evidence="2">Phosphorylation of Tyr-762, Tyr-807 and Tyr-822 are involved in binding to SYK, GRB2 and SYK, respectively. Phosphorylation of Tyr-842 is involved in binding to SYK, PLCG2 and PIK3R1/PIK3R2.</text>
</comment>
<comment type="PTM">
    <text evidence="2">Phosphorylated on tyrosine residues by LYN.</text>
</comment>
<comment type="similarity">
    <text evidence="5">Belongs to the immunoglobulin superfamily. SIGLEC (sialic acid binding Ig-like lectin) family.</text>
</comment>